<name>NADK_THEKO</name>
<comment type="function">
    <text evidence="1">Involved in the regulation of the intracellular balance of NAD and NADP, and is a key enzyme in the biosynthesis of NADP. Catalyzes specifically the phosphorylation on 2'-hydroxyl of the adenosine moiety of NAD to yield NADP.</text>
</comment>
<comment type="catalytic activity">
    <reaction evidence="1">
        <text>NAD(+) + ATP = ADP + NADP(+) + H(+)</text>
        <dbReference type="Rhea" id="RHEA:18629"/>
        <dbReference type="ChEBI" id="CHEBI:15378"/>
        <dbReference type="ChEBI" id="CHEBI:30616"/>
        <dbReference type="ChEBI" id="CHEBI:57540"/>
        <dbReference type="ChEBI" id="CHEBI:58349"/>
        <dbReference type="ChEBI" id="CHEBI:456216"/>
        <dbReference type="EC" id="2.7.1.23"/>
    </reaction>
</comment>
<comment type="cofactor">
    <cofactor evidence="1">
        <name>a divalent metal cation</name>
        <dbReference type="ChEBI" id="CHEBI:60240"/>
    </cofactor>
</comment>
<comment type="subcellular location">
    <subcellularLocation>
        <location evidence="1">Cytoplasm</location>
    </subcellularLocation>
</comment>
<comment type="similarity">
    <text evidence="1">Belongs to the NAD kinase family.</text>
</comment>
<evidence type="ECO:0000255" key="1">
    <source>
        <dbReference type="HAMAP-Rule" id="MF_00361"/>
    </source>
</evidence>
<protein>
    <recommendedName>
        <fullName evidence="1">NAD kinase</fullName>
        <ecNumber evidence="1">2.7.1.23</ecNumber>
    </recommendedName>
    <alternativeName>
        <fullName evidence="1">ATP-dependent NAD kinase</fullName>
    </alternativeName>
</protein>
<sequence length="278" mass="31197">MKFGVVARRDKLEALKLAYRVYDFLKVSGFDVVVDEDTYRYLGEFSEDDVLPLEEFDVDIIVVIGGDGTILRVEHKTKKEIPILGINMGTLGFLTEVEPHETFFALSRVIEGDYHIDERIKLRTFLDGENRVPDALNEVAVLTGIPGKIIHLKYYIDGGLADEVRADGLIISTPTGSTGYAMSAGGPFVDPRLDVVVIAPLAPIALSSRPMVVPSSSRIDVRNVAMTREVILSVDGQFYTYLSPETEITIVRSPRKTKFVRFNREIYPKYTMKIKSRF</sequence>
<keyword id="KW-0067">ATP-binding</keyword>
<keyword id="KW-0963">Cytoplasm</keyword>
<keyword id="KW-0418">Kinase</keyword>
<keyword id="KW-0520">NAD</keyword>
<keyword id="KW-0521">NADP</keyword>
<keyword id="KW-0547">Nucleotide-binding</keyword>
<keyword id="KW-1185">Reference proteome</keyword>
<keyword id="KW-0808">Transferase</keyword>
<dbReference type="EC" id="2.7.1.23" evidence="1"/>
<dbReference type="EMBL" id="AP006878">
    <property type="protein sequence ID" value="BAD86313.1"/>
    <property type="molecule type" value="Genomic_DNA"/>
</dbReference>
<dbReference type="RefSeq" id="WP_011251074.1">
    <property type="nucleotide sequence ID" value="NC_006624.1"/>
</dbReference>
<dbReference type="SMR" id="Q5JEW5"/>
<dbReference type="STRING" id="69014.TK2124"/>
<dbReference type="EnsemblBacteria" id="BAD86313">
    <property type="protein sequence ID" value="BAD86313"/>
    <property type="gene ID" value="TK2124"/>
</dbReference>
<dbReference type="GeneID" id="78448659"/>
<dbReference type="KEGG" id="tko:TK2124"/>
<dbReference type="PATRIC" id="fig|69014.16.peg.2080"/>
<dbReference type="eggNOG" id="arCOG01348">
    <property type="taxonomic scope" value="Archaea"/>
</dbReference>
<dbReference type="HOGENOM" id="CLU_008831_0_3_2"/>
<dbReference type="InParanoid" id="Q5JEW5"/>
<dbReference type="OrthoDB" id="77798at2157"/>
<dbReference type="PhylomeDB" id="Q5JEW5"/>
<dbReference type="Proteomes" id="UP000000536">
    <property type="component" value="Chromosome"/>
</dbReference>
<dbReference type="GO" id="GO:0005737">
    <property type="term" value="C:cytoplasm"/>
    <property type="evidence" value="ECO:0007669"/>
    <property type="project" value="UniProtKB-SubCell"/>
</dbReference>
<dbReference type="GO" id="GO:0005524">
    <property type="term" value="F:ATP binding"/>
    <property type="evidence" value="ECO:0007669"/>
    <property type="project" value="UniProtKB-KW"/>
</dbReference>
<dbReference type="GO" id="GO:0046872">
    <property type="term" value="F:metal ion binding"/>
    <property type="evidence" value="ECO:0007669"/>
    <property type="project" value="UniProtKB-UniRule"/>
</dbReference>
<dbReference type="GO" id="GO:0003951">
    <property type="term" value="F:NAD+ kinase activity"/>
    <property type="evidence" value="ECO:0000318"/>
    <property type="project" value="GO_Central"/>
</dbReference>
<dbReference type="GO" id="GO:0019674">
    <property type="term" value="P:NAD metabolic process"/>
    <property type="evidence" value="ECO:0007669"/>
    <property type="project" value="InterPro"/>
</dbReference>
<dbReference type="GO" id="GO:0006741">
    <property type="term" value="P:NADP biosynthetic process"/>
    <property type="evidence" value="ECO:0000318"/>
    <property type="project" value="GO_Central"/>
</dbReference>
<dbReference type="FunFam" id="2.60.200.30:FF:000009">
    <property type="entry name" value="Poly(P)/ATP NAD kinase"/>
    <property type="match status" value="1"/>
</dbReference>
<dbReference type="Gene3D" id="3.40.50.10330">
    <property type="entry name" value="Probable inorganic polyphosphate/atp-NAD kinase, domain 1"/>
    <property type="match status" value="1"/>
</dbReference>
<dbReference type="Gene3D" id="2.60.200.30">
    <property type="entry name" value="Probable inorganic polyphosphate/atp-NAD kinase, domain 2"/>
    <property type="match status" value="1"/>
</dbReference>
<dbReference type="HAMAP" id="MF_00361">
    <property type="entry name" value="NAD_kinase"/>
    <property type="match status" value="1"/>
</dbReference>
<dbReference type="InterPro" id="IPR017438">
    <property type="entry name" value="ATP-NAD_kinase_N"/>
</dbReference>
<dbReference type="InterPro" id="IPR017437">
    <property type="entry name" value="ATP-NAD_kinase_PpnK-typ_C"/>
</dbReference>
<dbReference type="InterPro" id="IPR016064">
    <property type="entry name" value="NAD/diacylglycerol_kinase_sf"/>
</dbReference>
<dbReference type="InterPro" id="IPR002504">
    <property type="entry name" value="NADK"/>
</dbReference>
<dbReference type="NCBIfam" id="NF002984">
    <property type="entry name" value="PRK03708.1"/>
    <property type="match status" value="1"/>
</dbReference>
<dbReference type="PANTHER" id="PTHR20275:SF43">
    <property type="entry name" value="BIFUNCTIONAL NADP PHOSPHATASE_NAD KINASE"/>
    <property type="match status" value="1"/>
</dbReference>
<dbReference type="PANTHER" id="PTHR20275">
    <property type="entry name" value="NAD KINASE"/>
    <property type="match status" value="1"/>
</dbReference>
<dbReference type="Pfam" id="PF01513">
    <property type="entry name" value="NAD_kinase"/>
    <property type="match status" value="1"/>
</dbReference>
<dbReference type="Pfam" id="PF20143">
    <property type="entry name" value="NAD_kinase_C"/>
    <property type="match status" value="1"/>
</dbReference>
<dbReference type="SUPFAM" id="SSF111331">
    <property type="entry name" value="NAD kinase/diacylglycerol kinase-like"/>
    <property type="match status" value="1"/>
</dbReference>
<organism>
    <name type="scientific">Thermococcus kodakarensis (strain ATCC BAA-918 / JCM 12380 / KOD1)</name>
    <name type="common">Pyrococcus kodakaraensis (strain KOD1)</name>
    <dbReference type="NCBI Taxonomy" id="69014"/>
    <lineage>
        <taxon>Archaea</taxon>
        <taxon>Methanobacteriati</taxon>
        <taxon>Methanobacteriota</taxon>
        <taxon>Thermococci</taxon>
        <taxon>Thermococcales</taxon>
        <taxon>Thermococcaceae</taxon>
        <taxon>Thermococcus</taxon>
    </lineage>
</organism>
<proteinExistence type="inferred from homology"/>
<accession>Q5JEW5</accession>
<gene>
    <name evidence="1" type="primary">nadK</name>
    <name type="ordered locus">TK2124</name>
</gene>
<feature type="chain" id="PRO_0000120708" description="NAD kinase">
    <location>
        <begin position="1"/>
        <end position="278"/>
    </location>
</feature>
<feature type="active site" description="Proton acceptor" evidence="1">
    <location>
        <position position="67"/>
    </location>
</feature>
<feature type="binding site" evidence="1">
    <location>
        <begin position="67"/>
        <end position="68"/>
    </location>
    <ligand>
        <name>NAD(+)</name>
        <dbReference type="ChEBI" id="CHEBI:57540"/>
    </ligand>
</feature>
<feature type="binding site" evidence="1">
    <location>
        <position position="72"/>
    </location>
    <ligand>
        <name>NAD(+)</name>
        <dbReference type="ChEBI" id="CHEBI:57540"/>
    </ligand>
</feature>
<feature type="binding site" evidence="1">
    <location>
        <begin position="137"/>
        <end position="138"/>
    </location>
    <ligand>
        <name>NAD(+)</name>
        <dbReference type="ChEBI" id="CHEBI:57540"/>
    </ligand>
</feature>
<feature type="binding site" evidence="1">
    <location>
        <position position="148"/>
    </location>
    <ligand>
        <name>NAD(+)</name>
        <dbReference type="ChEBI" id="CHEBI:57540"/>
    </ligand>
</feature>
<feature type="binding site" evidence="1">
    <location>
        <position position="165"/>
    </location>
    <ligand>
        <name>NAD(+)</name>
        <dbReference type="ChEBI" id="CHEBI:57540"/>
    </ligand>
</feature>
<feature type="binding site" evidence="1">
    <location>
        <position position="167"/>
    </location>
    <ligand>
        <name>NAD(+)</name>
        <dbReference type="ChEBI" id="CHEBI:57540"/>
    </ligand>
</feature>
<feature type="binding site" evidence="1">
    <location>
        <begin position="178"/>
        <end position="183"/>
    </location>
    <ligand>
        <name>NAD(+)</name>
        <dbReference type="ChEBI" id="CHEBI:57540"/>
    </ligand>
</feature>
<feature type="binding site" evidence="1">
    <location>
        <position position="202"/>
    </location>
    <ligand>
        <name>NAD(+)</name>
        <dbReference type="ChEBI" id="CHEBI:57540"/>
    </ligand>
</feature>
<feature type="binding site" evidence="1">
    <location>
        <position position="237"/>
    </location>
    <ligand>
        <name>NAD(+)</name>
        <dbReference type="ChEBI" id="CHEBI:57540"/>
    </ligand>
</feature>
<reference key="1">
    <citation type="journal article" date="2005" name="Genome Res.">
        <title>Complete genome sequence of the hyperthermophilic archaeon Thermococcus kodakaraensis KOD1 and comparison with Pyrococcus genomes.</title>
        <authorList>
            <person name="Fukui T."/>
            <person name="Atomi H."/>
            <person name="Kanai T."/>
            <person name="Matsumi R."/>
            <person name="Fujiwara S."/>
            <person name="Imanaka T."/>
        </authorList>
    </citation>
    <scope>NUCLEOTIDE SEQUENCE [LARGE SCALE GENOMIC DNA]</scope>
    <source>
        <strain>ATCC BAA-918 / JCM 12380 / KOD1</strain>
    </source>
</reference>